<keyword id="KW-0028">Amino-acid biosynthesis</keyword>
<keyword id="KW-0055">Arginine biosynthesis</keyword>
<keyword id="KW-0963">Cytoplasm</keyword>
<keyword id="KW-1185">Reference proteome</keyword>
<keyword id="KW-0808">Transferase</keyword>
<reference key="1">
    <citation type="journal article" date="2008" name="J. Bacteriol.">
        <title>The complete genome sequence of Actinobacillus pleuropneumoniae L20 (serotype 5b).</title>
        <authorList>
            <person name="Foote S.J."/>
            <person name="Bosse J.T."/>
            <person name="Bouevitch A.B."/>
            <person name="Langford P.R."/>
            <person name="Young N.M."/>
            <person name="Nash J.H.E."/>
        </authorList>
    </citation>
    <scope>NUCLEOTIDE SEQUENCE [LARGE SCALE GENOMIC DNA]</scope>
    <source>
        <strain>L20</strain>
    </source>
</reference>
<name>OTC_ACTP2</name>
<organism>
    <name type="scientific">Actinobacillus pleuropneumoniae serotype 5b (strain L20)</name>
    <dbReference type="NCBI Taxonomy" id="416269"/>
    <lineage>
        <taxon>Bacteria</taxon>
        <taxon>Pseudomonadati</taxon>
        <taxon>Pseudomonadota</taxon>
        <taxon>Gammaproteobacteria</taxon>
        <taxon>Pasteurellales</taxon>
        <taxon>Pasteurellaceae</taxon>
        <taxon>Actinobacillus</taxon>
    </lineage>
</organism>
<gene>
    <name evidence="2" type="primary">argF</name>
    <name type="ordered locus">APL_1317</name>
</gene>
<feature type="chain" id="PRO_1000065070" description="Ornithine carbamoyltransferase">
    <location>
        <begin position="1"/>
        <end position="334"/>
    </location>
</feature>
<feature type="binding site" evidence="2">
    <location>
        <begin position="57"/>
        <end position="60"/>
    </location>
    <ligand>
        <name>carbamoyl phosphate</name>
        <dbReference type="ChEBI" id="CHEBI:58228"/>
    </ligand>
</feature>
<feature type="binding site" evidence="2">
    <location>
        <position position="84"/>
    </location>
    <ligand>
        <name>carbamoyl phosphate</name>
        <dbReference type="ChEBI" id="CHEBI:58228"/>
    </ligand>
</feature>
<feature type="binding site" evidence="2">
    <location>
        <position position="108"/>
    </location>
    <ligand>
        <name>carbamoyl phosphate</name>
        <dbReference type="ChEBI" id="CHEBI:58228"/>
    </ligand>
</feature>
<feature type="binding site" evidence="2">
    <location>
        <begin position="135"/>
        <end position="138"/>
    </location>
    <ligand>
        <name>carbamoyl phosphate</name>
        <dbReference type="ChEBI" id="CHEBI:58228"/>
    </ligand>
</feature>
<feature type="binding site" evidence="2">
    <location>
        <position position="168"/>
    </location>
    <ligand>
        <name>L-ornithine</name>
        <dbReference type="ChEBI" id="CHEBI:46911"/>
    </ligand>
</feature>
<feature type="binding site" evidence="2">
    <location>
        <position position="232"/>
    </location>
    <ligand>
        <name>L-ornithine</name>
        <dbReference type="ChEBI" id="CHEBI:46911"/>
    </ligand>
</feature>
<feature type="binding site" evidence="2">
    <location>
        <begin position="236"/>
        <end position="237"/>
    </location>
    <ligand>
        <name>L-ornithine</name>
        <dbReference type="ChEBI" id="CHEBI:46911"/>
    </ligand>
</feature>
<feature type="binding site" evidence="2">
    <location>
        <begin position="274"/>
        <end position="275"/>
    </location>
    <ligand>
        <name>carbamoyl phosphate</name>
        <dbReference type="ChEBI" id="CHEBI:58228"/>
    </ligand>
</feature>
<feature type="binding site" evidence="2">
    <location>
        <position position="321"/>
    </location>
    <ligand>
        <name>carbamoyl phosphate</name>
        <dbReference type="ChEBI" id="CHEBI:58228"/>
    </ligand>
</feature>
<proteinExistence type="inferred from homology"/>
<comment type="function">
    <text evidence="1">Reversibly catalyzes the transfer of the carbamoyl group from carbamoyl phosphate (CP) to the N(epsilon) atom of ornithine (ORN) to produce L-citrulline.</text>
</comment>
<comment type="catalytic activity">
    <reaction evidence="2">
        <text>carbamoyl phosphate + L-ornithine = L-citrulline + phosphate + H(+)</text>
        <dbReference type="Rhea" id="RHEA:19513"/>
        <dbReference type="ChEBI" id="CHEBI:15378"/>
        <dbReference type="ChEBI" id="CHEBI:43474"/>
        <dbReference type="ChEBI" id="CHEBI:46911"/>
        <dbReference type="ChEBI" id="CHEBI:57743"/>
        <dbReference type="ChEBI" id="CHEBI:58228"/>
        <dbReference type="EC" id="2.1.3.3"/>
    </reaction>
</comment>
<comment type="pathway">
    <text evidence="2">Amino-acid biosynthesis; L-arginine biosynthesis; L-arginine from L-ornithine and carbamoyl phosphate: step 1/3.</text>
</comment>
<comment type="subcellular location">
    <subcellularLocation>
        <location evidence="2">Cytoplasm</location>
    </subcellularLocation>
</comment>
<comment type="similarity">
    <text evidence="2">Belongs to the aspartate/ornithine carbamoyltransferase superfamily. OTCase family.</text>
</comment>
<sequence>MAFNLKNRHLLSLVNHTEREIKFLLDLSRDLKRAKYAGTEQQRLKGKNIALIFEKTSTRTRCAFEVAAYDQGAHVTYIDPTSSQIGHKESMKDTARVLGRMYDAIEYRGFKQSVVNELAEYAGVPVFNGLTDEFHPTQMLADVLTMIENCEKPLSQISYVYIGDARNNVGNSLLLIGAKLGMDVRICAPKALLPEDSLVEMCQKFAAESGARITVTDDIDTAVKGVDFVHTDVWVSMGEPLETWGERIDMLMPYQVTPELMKRTGNPKVKFMHCLPAFHNSETKIGKQVAEKYPALANGIEVTEDVFESPANVAFEQAENRMHTIKAVMVASLA</sequence>
<dbReference type="EC" id="2.1.3.3" evidence="2"/>
<dbReference type="EMBL" id="CP000569">
    <property type="protein sequence ID" value="ABN74401.1"/>
    <property type="molecule type" value="Genomic_DNA"/>
</dbReference>
<dbReference type="RefSeq" id="WP_005598400.1">
    <property type="nucleotide sequence ID" value="NC_009053.1"/>
</dbReference>
<dbReference type="SMR" id="A3N1W5"/>
<dbReference type="STRING" id="416269.APL_1317"/>
<dbReference type="EnsemblBacteria" id="ABN74401">
    <property type="protein sequence ID" value="ABN74401"/>
    <property type="gene ID" value="APL_1317"/>
</dbReference>
<dbReference type="KEGG" id="apl:APL_1317"/>
<dbReference type="eggNOG" id="COG0078">
    <property type="taxonomic scope" value="Bacteria"/>
</dbReference>
<dbReference type="HOGENOM" id="CLU_043846_3_1_6"/>
<dbReference type="UniPathway" id="UPA00068">
    <property type="reaction ID" value="UER00112"/>
</dbReference>
<dbReference type="Proteomes" id="UP000001432">
    <property type="component" value="Chromosome"/>
</dbReference>
<dbReference type="GO" id="GO:0005737">
    <property type="term" value="C:cytoplasm"/>
    <property type="evidence" value="ECO:0007669"/>
    <property type="project" value="UniProtKB-SubCell"/>
</dbReference>
<dbReference type="GO" id="GO:0016597">
    <property type="term" value="F:amino acid binding"/>
    <property type="evidence" value="ECO:0007669"/>
    <property type="project" value="InterPro"/>
</dbReference>
<dbReference type="GO" id="GO:0004585">
    <property type="term" value="F:ornithine carbamoyltransferase activity"/>
    <property type="evidence" value="ECO:0007669"/>
    <property type="project" value="UniProtKB-UniRule"/>
</dbReference>
<dbReference type="GO" id="GO:0042450">
    <property type="term" value="P:arginine biosynthetic process via ornithine"/>
    <property type="evidence" value="ECO:0007669"/>
    <property type="project" value="TreeGrafter"/>
</dbReference>
<dbReference type="GO" id="GO:0019240">
    <property type="term" value="P:citrulline biosynthetic process"/>
    <property type="evidence" value="ECO:0007669"/>
    <property type="project" value="TreeGrafter"/>
</dbReference>
<dbReference type="GO" id="GO:0006526">
    <property type="term" value="P:L-arginine biosynthetic process"/>
    <property type="evidence" value="ECO:0007669"/>
    <property type="project" value="UniProtKB-UniRule"/>
</dbReference>
<dbReference type="FunFam" id="3.40.50.1370:FF:000003">
    <property type="entry name" value="Ornithine carbamoyltransferase"/>
    <property type="match status" value="1"/>
</dbReference>
<dbReference type="Gene3D" id="3.40.50.1370">
    <property type="entry name" value="Aspartate/ornithine carbamoyltransferase"/>
    <property type="match status" value="2"/>
</dbReference>
<dbReference type="HAMAP" id="MF_01109">
    <property type="entry name" value="OTCase"/>
    <property type="match status" value="1"/>
</dbReference>
<dbReference type="InterPro" id="IPR006132">
    <property type="entry name" value="Asp/Orn_carbamoyltranf_P-bd"/>
</dbReference>
<dbReference type="InterPro" id="IPR006130">
    <property type="entry name" value="Asp/Orn_carbamoylTrfase"/>
</dbReference>
<dbReference type="InterPro" id="IPR036901">
    <property type="entry name" value="Asp/Orn_carbamoylTrfase_sf"/>
</dbReference>
<dbReference type="InterPro" id="IPR006131">
    <property type="entry name" value="Asp_carbamoyltransf_Asp/Orn-bd"/>
</dbReference>
<dbReference type="InterPro" id="IPR002292">
    <property type="entry name" value="Orn/put_carbamltrans"/>
</dbReference>
<dbReference type="InterPro" id="IPR024904">
    <property type="entry name" value="OTCase_ArgI"/>
</dbReference>
<dbReference type="NCBIfam" id="TIGR00658">
    <property type="entry name" value="orni_carb_tr"/>
    <property type="match status" value="1"/>
</dbReference>
<dbReference type="NCBIfam" id="NF001986">
    <property type="entry name" value="PRK00779.1"/>
    <property type="match status" value="1"/>
</dbReference>
<dbReference type="NCBIfam" id="NF002470">
    <property type="entry name" value="PRK01713.1"/>
    <property type="match status" value="1"/>
</dbReference>
<dbReference type="NCBIfam" id="NF003286">
    <property type="entry name" value="PRK04284.1"/>
    <property type="match status" value="1"/>
</dbReference>
<dbReference type="PANTHER" id="PTHR45753:SF2">
    <property type="entry name" value="ORNITHINE CARBAMOYLTRANSFERASE"/>
    <property type="match status" value="1"/>
</dbReference>
<dbReference type="PANTHER" id="PTHR45753">
    <property type="entry name" value="ORNITHINE CARBAMOYLTRANSFERASE, MITOCHONDRIAL"/>
    <property type="match status" value="1"/>
</dbReference>
<dbReference type="Pfam" id="PF00185">
    <property type="entry name" value="OTCace"/>
    <property type="match status" value="1"/>
</dbReference>
<dbReference type="Pfam" id="PF02729">
    <property type="entry name" value="OTCace_N"/>
    <property type="match status" value="1"/>
</dbReference>
<dbReference type="PRINTS" id="PR00100">
    <property type="entry name" value="AOTCASE"/>
</dbReference>
<dbReference type="PRINTS" id="PR00102">
    <property type="entry name" value="OTCASE"/>
</dbReference>
<dbReference type="SUPFAM" id="SSF53671">
    <property type="entry name" value="Aspartate/ornithine carbamoyltransferase"/>
    <property type="match status" value="1"/>
</dbReference>
<dbReference type="PROSITE" id="PS00097">
    <property type="entry name" value="CARBAMOYLTRANSFERASE"/>
    <property type="match status" value="1"/>
</dbReference>
<evidence type="ECO:0000250" key="1"/>
<evidence type="ECO:0000255" key="2">
    <source>
        <dbReference type="HAMAP-Rule" id="MF_01109"/>
    </source>
</evidence>
<protein>
    <recommendedName>
        <fullName evidence="2">Ornithine carbamoyltransferase</fullName>
        <shortName evidence="2">OTCase</shortName>
        <ecNumber evidence="2">2.1.3.3</ecNumber>
    </recommendedName>
</protein>
<accession>A3N1W5</accession>